<feature type="chain" id="PRO_0000356912" description="Peroxynitrite isomerase 2">
    <location>
        <begin position="1"/>
        <end position="161"/>
    </location>
</feature>
<feature type="short sequence motif" description="GXWXGXG" evidence="1">
    <location>
        <begin position="17"/>
        <end position="23"/>
    </location>
</feature>
<feature type="binding site" description="axial binding residue" evidence="1">
    <location>
        <position position="152"/>
    </location>
    <ligand>
        <name>heme b</name>
        <dbReference type="ChEBI" id="CHEBI:60344"/>
    </ligand>
    <ligandPart>
        <name>Fe</name>
        <dbReference type="ChEBI" id="CHEBI:18248"/>
    </ligandPart>
</feature>
<accession>A0QIQ0</accession>
<evidence type="ECO:0000255" key="1">
    <source>
        <dbReference type="HAMAP-Rule" id="MF_01297"/>
    </source>
</evidence>
<reference key="1">
    <citation type="submission" date="2006-10" db="EMBL/GenBank/DDBJ databases">
        <authorList>
            <person name="Fleischmann R.D."/>
            <person name="Dodson R.J."/>
            <person name="Haft D.H."/>
            <person name="Merkel J.S."/>
            <person name="Nelson W.C."/>
            <person name="Fraser C.M."/>
        </authorList>
    </citation>
    <scope>NUCLEOTIDE SEQUENCE [LARGE SCALE GENOMIC DNA]</scope>
    <source>
        <strain>104</strain>
    </source>
</reference>
<protein>
    <recommendedName>
        <fullName>Peroxynitrite isomerase 2</fullName>
        <ecNumber evidence="1">5.99.-.-</ecNumber>
    </recommendedName>
    <alternativeName>
        <fullName>Ferric nitrobindin</fullName>
        <shortName>Nb(III)</shortName>
    </alternativeName>
</protein>
<proteinExistence type="inferred from homology"/>
<keyword id="KW-0349">Heme</keyword>
<keyword id="KW-0408">Iron</keyword>
<keyword id="KW-0413">Isomerase</keyword>
<keyword id="KW-0479">Metal-binding</keyword>
<organism>
    <name type="scientific">Mycobacterium avium (strain 104)</name>
    <dbReference type="NCBI Taxonomy" id="243243"/>
    <lineage>
        <taxon>Bacteria</taxon>
        <taxon>Bacillati</taxon>
        <taxon>Actinomycetota</taxon>
        <taxon>Actinomycetes</taxon>
        <taxon>Mycobacteriales</taxon>
        <taxon>Mycobacteriaceae</taxon>
        <taxon>Mycobacterium</taxon>
        <taxon>Mycobacterium avium complex (MAC)</taxon>
    </lineage>
</organism>
<comment type="function">
    <text evidence="1">Heme-binding protein able to scavenge peroxynitrite and to protect free L-tyrosine against peroxynitrite-mediated nitration, by acting as a peroxynitrite isomerase that converts peroxynitrite to nitrate. Therefore, this protein likely plays a role in peroxynitrite sensing and in the detoxification of reactive nitrogen and oxygen species (RNS and ROS, respectively). Is able to bind nitric oxide (NO) in vitro, but may act as a sensor of peroxynitrite levels in vivo.</text>
</comment>
<comment type="catalytic activity">
    <reaction evidence="1">
        <text>peroxynitrite = nitrate</text>
        <dbReference type="Rhea" id="RHEA:63116"/>
        <dbReference type="ChEBI" id="CHEBI:17632"/>
        <dbReference type="ChEBI" id="CHEBI:25941"/>
    </reaction>
    <physiologicalReaction direction="left-to-right" evidence="1">
        <dbReference type="Rhea" id="RHEA:63117"/>
    </physiologicalReaction>
</comment>
<comment type="cofactor">
    <cofactor evidence="1">
        <name>heme b</name>
        <dbReference type="ChEBI" id="CHEBI:60344"/>
    </cofactor>
    <text evidence="1">Binds 1 heme b group per subunit, that coordinates a highly solvent-exposed Fe(III) atom.</text>
</comment>
<comment type="pathway">
    <text evidence="1">Nitrogen metabolism.</text>
</comment>
<comment type="subunit">
    <text evidence="1">Homodimer.</text>
</comment>
<comment type="domain">
    <text evidence="1">Forms a 10-stranded antiparallel beta-barrel structure able to accommodate a hydrophobic ligand in its interior. In fact, this fold hosts the heme group, which is located in a wide surface cleft.</text>
</comment>
<comment type="similarity">
    <text evidence="1">Belongs to the nitrobindin family.</text>
</comment>
<gene>
    <name type="ordered locus">MAV_3611</name>
</gene>
<sequence length="161" mass="17421">MPTDLHPDLAALAPLLGTWTGRGSGKYPTIQPFDYLEEVTFSHVGKPFLAYAQKTRAAADGKPLHAETGYLRVPQPGRLELVLAHPSGITEIEVGSYAVTGGLIEMRMSTTSIGLTPTAKEVTALGRWFRIDGDKLSYSVQMGAVGQPLQDHLAAVLHRQR</sequence>
<name>NB2_MYCA1</name>
<dbReference type="EC" id="5.99.-.-" evidence="1"/>
<dbReference type="EMBL" id="CP000479">
    <property type="protein sequence ID" value="ABK65408.1"/>
    <property type="molecule type" value="Genomic_DNA"/>
</dbReference>
<dbReference type="RefSeq" id="WP_011725567.1">
    <property type="nucleotide sequence ID" value="NC_008595.1"/>
</dbReference>
<dbReference type="SMR" id="A0QIQ0"/>
<dbReference type="KEGG" id="mav:MAV_3611"/>
<dbReference type="HOGENOM" id="CLU_085483_1_0_11"/>
<dbReference type="Proteomes" id="UP000001574">
    <property type="component" value="Chromosome"/>
</dbReference>
<dbReference type="GO" id="GO:0020037">
    <property type="term" value="F:heme binding"/>
    <property type="evidence" value="ECO:0007669"/>
    <property type="project" value="UniProtKB-UniRule"/>
</dbReference>
<dbReference type="GO" id="GO:0046872">
    <property type="term" value="F:metal ion binding"/>
    <property type="evidence" value="ECO:0007669"/>
    <property type="project" value="UniProtKB-KW"/>
</dbReference>
<dbReference type="GO" id="GO:0062213">
    <property type="term" value="F:peroxynitrite isomerase activity"/>
    <property type="evidence" value="ECO:0007669"/>
    <property type="project" value="UniProtKB-UniRule"/>
</dbReference>
<dbReference type="CDD" id="cd07828">
    <property type="entry name" value="lipocalin_heme-bd-THAP4-like"/>
    <property type="match status" value="1"/>
</dbReference>
<dbReference type="Gene3D" id="2.40.128.20">
    <property type="match status" value="1"/>
</dbReference>
<dbReference type="HAMAP" id="MF_01297">
    <property type="entry name" value="nitrobindin"/>
    <property type="match status" value="1"/>
</dbReference>
<dbReference type="InterPro" id="IPR012674">
    <property type="entry name" value="Calycin"/>
</dbReference>
<dbReference type="InterPro" id="IPR022939">
    <property type="entry name" value="Nb(III)_bact/plant"/>
</dbReference>
<dbReference type="InterPro" id="IPR045165">
    <property type="entry name" value="Nitrobindin"/>
</dbReference>
<dbReference type="InterPro" id="IPR054873">
    <property type="entry name" value="PeroxynitIsom"/>
</dbReference>
<dbReference type="InterPro" id="IPR014878">
    <property type="entry name" value="THAP4-like_heme-bd"/>
</dbReference>
<dbReference type="NCBIfam" id="NF045819">
    <property type="entry name" value="PeroxynitIsom"/>
    <property type="match status" value="1"/>
</dbReference>
<dbReference type="PANTHER" id="PTHR15854:SF4">
    <property type="entry name" value="PEROXYNITRITE ISOMERASE THAP4"/>
    <property type="match status" value="1"/>
</dbReference>
<dbReference type="PANTHER" id="PTHR15854">
    <property type="entry name" value="THAP4 PROTEIN"/>
    <property type="match status" value="1"/>
</dbReference>
<dbReference type="Pfam" id="PF08768">
    <property type="entry name" value="THAP4_heme-bd"/>
    <property type="match status" value="1"/>
</dbReference>
<dbReference type="SUPFAM" id="SSF50814">
    <property type="entry name" value="Lipocalins"/>
    <property type="match status" value="1"/>
</dbReference>